<name>Y2097_ARCFU</name>
<keyword id="KW-0533">Nickel</keyword>
<keyword id="KW-1185">Reference proteome</keyword>
<comment type="similarity">
    <text evidence="1">Belongs to the LarC family.</text>
</comment>
<gene>
    <name type="ordered locus">AF_2097</name>
</gene>
<proteinExistence type="inferred from homology"/>
<dbReference type="EMBL" id="AE000782">
    <property type="protein sequence ID" value="AAB89158.1"/>
    <property type="molecule type" value="Genomic_DNA"/>
</dbReference>
<dbReference type="PIR" id="A69512">
    <property type="entry name" value="A69512"/>
</dbReference>
<dbReference type="SMR" id="O28183"/>
<dbReference type="STRING" id="224325.AF_2097"/>
<dbReference type="PaxDb" id="224325-AF_2097"/>
<dbReference type="EnsemblBacteria" id="AAB89158">
    <property type="protein sequence ID" value="AAB89158"/>
    <property type="gene ID" value="AF_2097"/>
</dbReference>
<dbReference type="KEGG" id="afu:AF_2097"/>
<dbReference type="eggNOG" id="arCOG02701">
    <property type="taxonomic scope" value="Archaea"/>
</dbReference>
<dbReference type="HOGENOM" id="CLU_028523_2_1_2"/>
<dbReference type="OrthoDB" id="10691at2157"/>
<dbReference type="PhylomeDB" id="O28183"/>
<dbReference type="Proteomes" id="UP000002199">
    <property type="component" value="Chromosome"/>
</dbReference>
<dbReference type="GO" id="GO:0016829">
    <property type="term" value="F:lyase activity"/>
    <property type="evidence" value="ECO:0007669"/>
    <property type="project" value="UniProtKB-UniRule"/>
</dbReference>
<dbReference type="GO" id="GO:0016151">
    <property type="term" value="F:nickel cation binding"/>
    <property type="evidence" value="ECO:0007669"/>
    <property type="project" value="UniProtKB-UniRule"/>
</dbReference>
<dbReference type="Gene3D" id="3.10.20.300">
    <property type="entry name" value="mk0293 like domain"/>
    <property type="match status" value="1"/>
</dbReference>
<dbReference type="Gene3D" id="3.30.70.1380">
    <property type="entry name" value="Transcriptional regulatory protein pf0864 domain like"/>
    <property type="match status" value="1"/>
</dbReference>
<dbReference type="HAMAP" id="MF_01074">
    <property type="entry name" value="LarC"/>
    <property type="match status" value="1"/>
</dbReference>
<dbReference type="InterPro" id="IPR002822">
    <property type="entry name" value="Ni_insertion"/>
</dbReference>
<dbReference type="NCBIfam" id="TIGR00299">
    <property type="entry name" value="nickel pincer cofactor biosynthesis protein LarC"/>
    <property type="match status" value="1"/>
</dbReference>
<dbReference type="PANTHER" id="PTHR36566">
    <property type="entry name" value="NICKEL INSERTION PROTEIN-RELATED"/>
    <property type="match status" value="1"/>
</dbReference>
<dbReference type="PANTHER" id="PTHR36566:SF1">
    <property type="entry name" value="PYRIDINIUM-3,5-BISTHIOCARBOXYLIC ACID MONONUCLEOTIDE NICKEL INSERTION PROTEIN"/>
    <property type="match status" value="1"/>
</dbReference>
<dbReference type="Pfam" id="PF01969">
    <property type="entry name" value="Ni_insertion"/>
    <property type="match status" value="1"/>
</dbReference>
<protein>
    <recommendedName>
        <fullName evidence="1">Putative nickel insertion protein</fullName>
    </recommendedName>
</protein>
<accession>O28183</accession>
<sequence>MKVAIFDAFNGASGDMILASLLGVGISEEEIDEVVKALGIDVNYSMTTVSVRGISARRVEVEERDGERSFKEVLEIIRSSNLEEGVKKNAIAVFELIARAEGKVHGRDYREGVFHEVGADDAIFDVVCCVKAFENLKTAGYEFFATPVRAGSGFVEFSHGKYPVPPPAVLEILKSSNLEVVMDGEGELLTPTGAAILSHYCKPLKPFPIRVKEVSYGAGKRETDVPNVLRLILGETAFHDSIVVIETSVDDLSGEMIGYAMKKLLERDDVLDAVIIPAYGKKMRPASILKVISPTHRSEEVAAEVMRLTGSLGIRIIPVHHRLISERMEEVVKVEISGKEFDVRVKRSYPGFRHLKPEFDDIAVIADELNIPPHVVYREIVRKIVGAENADSNGQ</sequence>
<evidence type="ECO:0000255" key="1">
    <source>
        <dbReference type="HAMAP-Rule" id="MF_01074"/>
    </source>
</evidence>
<organism>
    <name type="scientific">Archaeoglobus fulgidus (strain ATCC 49558 / DSM 4304 / JCM 9628 / NBRC 100126 / VC-16)</name>
    <dbReference type="NCBI Taxonomy" id="224325"/>
    <lineage>
        <taxon>Archaea</taxon>
        <taxon>Methanobacteriati</taxon>
        <taxon>Methanobacteriota</taxon>
        <taxon>Archaeoglobi</taxon>
        <taxon>Archaeoglobales</taxon>
        <taxon>Archaeoglobaceae</taxon>
        <taxon>Archaeoglobus</taxon>
    </lineage>
</organism>
<feature type="chain" id="PRO_0000146858" description="Putative nickel insertion protein">
    <location>
        <begin position="1"/>
        <end position="395"/>
    </location>
</feature>
<reference key="1">
    <citation type="journal article" date="1997" name="Nature">
        <title>The complete genome sequence of the hyperthermophilic, sulphate-reducing archaeon Archaeoglobus fulgidus.</title>
        <authorList>
            <person name="Klenk H.-P."/>
            <person name="Clayton R.A."/>
            <person name="Tomb J.-F."/>
            <person name="White O."/>
            <person name="Nelson K.E."/>
            <person name="Ketchum K.A."/>
            <person name="Dodson R.J."/>
            <person name="Gwinn M.L."/>
            <person name="Hickey E.K."/>
            <person name="Peterson J.D."/>
            <person name="Richardson D.L."/>
            <person name="Kerlavage A.R."/>
            <person name="Graham D.E."/>
            <person name="Kyrpides N.C."/>
            <person name="Fleischmann R.D."/>
            <person name="Quackenbush J."/>
            <person name="Lee N.H."/>
            <person name="Sutton G.G."/>
            <person name="Gill S.R."/>
            <person name="Kirkness E.F."/>
            <person name="Dougherty B.A."/>
            <person name="McKenney K."/>
            <person name="Adams M.D."/>
            <person name="Loftus B.J."/>
            <person name="Peterson S.N."/>
            <person name="Reich C.I."/>
            <person name="McNeil L.K."/>
            <person name="Badger J.H."/>
            <person name="Glodek A."/>
            <person name="Zhou L."/>
            <person name="Overbeek R."/>
            <person name="Gocayne J.D."/>
            <person name="Weidman J.F."/>
            <person name="McDonald L.A."/>
            <person name="Utterback T.R."/>
            <person name="Cotton M.D."/>
            <person name="Spriggs T."/>
            <person name="Artiach P."/>
            <person name="Kaine B.P."/>
            <person name="Sykes S.M."/>
            <person name="Sadow P.W."/>
            <person name="D'Andrea K.P."/>
            <person name="Bowman C."/>
            <person name="Fujii C."/>
            <person name="Garland S.A."/>
            <person name="Mason T.M."/>
            <person name="Olsen G.J."/>
            <person name="Fraser C.M."/>
            <person name="Smith H.O."/>
            <person name="Woese C.R."/>
            <person name="Venter J.C."/>
        </authorList>
    </citation>
    <scope>NUCLEOTIDE SEQUENCE [LARGE SCALE GENOMIC DNA]</scope>
    <source>
        <strain>ATCC 49558 / DSM 4304 / JCM 9628 / NBRC 100126 / VC-16</strain>
    </source>
</reference>